<proteinExistence type="inferred from homology"/>
<accession>Q2STK2</accession>
<feature type="chain" id="PRO_1000045576" description="Glycine dehydrogenase (decarboxylating)">
    <location>
        <begin position="1"/>
        <end position="975"/>
    </location>
</feature>
<feature type="modified residue" description="N6-(pyridoxal phosphate)lysine" evidence="1">
    <location>
        <position position="723"/>
    </location>
</feature>
<organism>
    <name type="scientific">Burkholderia thailandensis (strain ATCC 700388 / DSM 13276 / CCUG 48851 / CIP 106301 / E264)</name>
    <dbReference type="NCBI Taxonomy" id="271848"/>
    <lineage>
        <taxon>Bacteria</taxon>
        <taxon>Pseudomonadati</taxon>
        <taxon>Pseudomonadota</taxon>
        <taxon>Betaproteobacteria</taxon>
        <taxon>Burkholderiales</taxon>
        <taxon>Burkholderiaceae</taxon>
        <taxon>Burkholderia</taxon>
        <taxon>pseudomallei group</taxon>
    </lineage>
</organism>
<sequence>MKLEHPDRLMKRTPLSLAALETHDAFAERHIGPDAASQQAMLDTLGFATRAALIDAVIPASIRRAETLPLGPFAQPLSEAEALAALRELADKNQVFRSYIGQGYYDTHTPAVILRNVLENPAWYTAYTPYQPEISQGRLEALLNFQQMVADLTGLEISNASLLDEATAAAEAMTLLQRVGKPQSNVFYVADDVLPQTLEVIKTRAKPIGIEVKSGPAADAAAANAFGVLLQYPGVNGDVRDYRALADAIHAAGGHVVVAADILALTVLTPPGEWGADVAVGNTQRFGVPMGFGGPHAAYMAVRDEFKRQMPGRLVGVTVDAQGKPALRLALQTREQHIRREKATSNVCTAQALLAIMASMYAVYHGPRGLKTIALRVNRIAALVAAGVKQLGFATVNDTFFDTLTIDTGARTAQIHALANAKRINLRRVSDTRVGISVDETTTRGDLAELLGVFAQAAGGTAPDVDALDAGLADTAALPAGLQRTSAYLTHHVFNRHHSETEMLRYLRSLSDKDLALDRSMIPLGSCTMKLNATSEMLPVTWPEFGRIHPFAPAEQTVGYREMIDQLEQMLVAATGYAAVSLQPNAGSQGEYAGLLIIHAYHESRGESHRNVCLIPASAHGTNPASAHMAGMKVVVVACDAQGNVDIDDLKAKAEQHANDLAAIMITYPSTHGVFEQNVREICEIVHAHGGQVYVDGANMNAMVGLTAPGQFGGDVSHLNLHKTFCIPHGGGGPGVGPVAVGAHLAKFLPNQRSTGYARAEDGIGAVSAAPYGSASILPISWMYIAMMGAKNLTAATETAILNANYIAKRLAPHYPVLYSGPGGLVAHECILDLRPIKDSSGITVDDVAKRLMDYGFHAPTMSFPVPGTLMVEPTESESQEELDRFVAAMIAIRDEIRAVEEGRADREDNPLRHAPHTAAVVTANEWPHAYSREQAAYPVASLVANKYWPPVGRADNAYGDRNLFCSCVPVSDYA</sequence>
<dbReference type="EC" id="1.4.4.2" evidence="1"/>
<dbReference type="EMBL" id="CP000086">
    <property type="protein sequence ID" value="ABC38436.1"/>
    <property type="molecule type" value="Genomic_DNA"/>
</dbReference>
<dbReference type="RefSeq" id="WP_009910201.1">
    <property type="nucleotide sequence ID" value="NZ_CP008785.1"/>
</dbReference>
<dbReference type="SMR" id="Q2STK2"/>
<dbReference type="GeneID" id="45122930"/>
<dbReference type="KEGG" id="bte:BTH_I3253"/>
<dbReference type="HOGENOM" id="CLU_004620_2_1_4"/>
<dbReference type="Proteomes" id="UP000001930">
    <property type="component" value="Chromosome I"/>
</dbReference>
<dbReference type="GO" id="GO:0005829">
    <property type="term" value="C:cytosol"/>
    <property type="evidence" value="ECO:0007669"/>
    <property type="project" value="TreeGrafter"/>
</dbReference>
<dbReference type="GO" id="GO:0005960">
    <property type="term" value="C:glycine cleavage complex"/>
    <property type="evidence" value="ECO:0007669"/>
    <property type="project" value="TreeGrafter"/>
</dbReference>
<dbReference type="GO" id="GO:0016594">
    <property type="term" value="F:glycine binding"/>
    <property type="evidence" value="ECO:0007669"/>
    <property type="project" value="TreeGrafter"/>
</dbReference>
<dbReference type="GO" id="GO:0004375">
    <property type="term" value="F:glycine dehydrogenase (decarboxylating) activity"/>
    <property type="evidence" value="ECO:0007669"/>
    <property type="project" value="UniProtKB-EC"/>
</dbReference>
<dbReference type="GO" id="GO:0030170">
    <property type="term" value="F:pyridoxal phosphate binding"/>
    <property type="evidence" value="ECO:0007669"/>
    <property type="project" value="TreeGrafter"/>
</dbReference>
<dbReference type="GO" id="GO:0019464">
    <property type="term" value="P:glycine decarboxylation via glycine cleavage system"/>
    <property type="evidence" value="ECO:0007669"/>
    <property type="project" value="UniProtKB-UniRule"/>
</dbReference>
<dbReference type="CDD" id="cd00613">
    <property type="entry name" value="GDC-P"/>
    <property type="match status" value="2"/>
</dbReference>
<dbReference type="FunFam" id="3.40.640.10:FF:000005">
    <property type="entry name" value="Glycine dehydrogenase (decarboxylating), mitochondrial"/>
    <property type="match status" value="1"/>
</dbReference>
<dbReference type="FunFam" id="3.90.1150.10:FF:000007">
    <property type="entry name" value="Glycine dehydrogenase (decarboxylating), mitochondrial"/>
    <property type="match status" value="1"/>
</dbReference>
<dbReference type="FunFam" id="3.40.640.10:FF:000007">
    <property type="entry name" value="glycine dehydrogenase (Decarboxylating), mitochondrial"/>
    <property type="match status" value="1"/>
</dbReference>
<dbReference type="Gene3D" id="3.90.1150.10">
    <property type="entry name" value="Aspartate Aminotransferase, domain 1"/>
    <property type="match status" value="2"/>
</dbReference>
<dbReference type="Gene3D" id="3.40.640.10">
    <property type="entry name" value="Type I PLP-dependent aspartate aminotransferase-like (Major domain)"/>
    <property type="match status" value="2"/>
</dbReference>
<dbReference type="HAMAP" id="MF_00711">
    <property type="entry name" value="GcvP"/>
    <property type="match status" value="1"/>
</dbReference>
<dbReference type="InterPro" id="IPR003437">
    <property type="entry name" value="GcvP"/>
</dbReference>
<dbReference type="InterPro" id="IPR049316">
    <property type="entry name" value="GDC-P_C"/>
</dbReference>
<dbReference type="InterPro" id="IPR049315">
    <property type="entry name" value="GDC-P_N"/>
</dbReference>
<dbReference type="InterPro" id="IPR020581">
    <property type="entry name" value="GDC_P"/>
</dbReference>
<dbReference type="InterPro" id="IPR015424">
    <property type="entry name" value="PyrdxlP-dep_Trfase"/>
</dbReference>
<dbReference type="InterPro" id="IPR015421">
    <property type="entry name" value="PyrdxlP-dep_Trfase_major"/>
</dbReference>
<dbReference type="InterPro" id="IPR015422">
    <property type="entry name" value="PyrdxlP-dep_Trfase_small"/>
</dbReference>
<dbReference type="NCBIfam" id="TIGR00461">
    <property type="entry name" value="gcvP"/>
    <property type="match status" value="1"/>
</dbReference>
<dbReference type="NCBIfam" id="NF003346">
    <property type="entry name" value="PRK04366.1"/>
    <property type="match status" value="1"/>
</dbReference>
<dbReference type="PANTHER" id="PTHR11773:SF1">
    <property type="entry name" value="GLYCINE DEHYDROGENASE (DECARBOXYLATING), MITOCHONDRIAL"/>
    <property type="match status" value="1"/>
</dbReference>
<dbReference type="PANTHER" id="PTHR11773">
    <property type="entry name" value="GLYCINE DEHYDROGENASE, DECARBOXYLATING"/>
    <property type="match status" value="1"/>
</dbReference>
<dbReference type="Pfam" id="PF21478">
    <property type="entry name" value="GcvP2_C"/>
    <property type="match status" value="1"/>
</dbReference>
<dbReference type="Pfam" id="PF02347">
    <property type="entry name" value="GDC-P"/>
    <property type="match status" value="2"/>
</dbReference>
<dbReference type="SUPFAM" id="SSF53383">
    <property type="entry name" value="PLP-dependent transferases"/>
    <property type="match status" value="2"/>
</dbReference>
<evidence type="ECO:0000255" key="1">
    <source>
        <dbReference type="HAMAP-Rule" id="MF_00711"/>
    </source>
</evidence>
<reference key="1">
    <citation type="journal article" date="2005" name="BMC Genomics">
        <title>Bacterial genome adaptation to niches: divergence of the potential virulence genes in three Burkholderia species of different survival strategies.</title>
        <authorList>
            <person name="Kim H.S."/>
            <person name="Schell M.A."/>
            <person name="Yu Y."/>
            <person name="Ulrich R.L."/>
            <person name="Sarria S.H."/>
            <person name="Nierman W.C."/>
            <person name="DeShazer D."/>
        </authorList>
    </citation>
    <scope>NUCLEOTIDE SEQUENCE [LARGE SCALE GENOMIC DNA]</scope>
    <source>
        <strain>ATCC 700388 / DSM 13276 / CCUG 48851 / CIP 106301 / E264</strain>
    </source>
</reference>
<keyword id="KW-0560">Oxidoreductase</keyword>
<keyword id="KW-0663">Pyridoxal phosphate</keyword>
<comment type="function">
    <text evidence="1">The glycine cleavage system catalyzes the degradation of glycine. The P protein binds the alpha-amino group of glycine through its pyridoxal phosphate cofactor; CO(2) is released and the remaining methylamine moiety is then transferred to the lipoamide cofactor of the H protein.</text>
</comment>
<comment type="catalytic activity">
    <reaction evidence="1">
        <text>N(6)-[(R)-lipoyl]-L-lysyl-[glycine-cleavage complex H protein] + glycine + H(+) = N(6)-[(R)-S(8)-aminomethyldihydrolipoyl]-L-lysyl-[glycine-cleavage complex H protein] + CO2</text>
        <dbReference type="Rhea" id="RHEA:24304"/>
        <dbReference type="Rhea" id="RHEA-COMP:10494"/>
        <dbReference type="Rhea" id="RHEA-COMP:10495"/>
        <dbReference type="ChEBI" id="CHEBI:15378"/>
        <dbReference type="ChEBI" id="CHEBI:16526"/>
        <dbReference type="ChEBI" id="CHEBI:57305"/>
        <dbReference type="ChEBI" id="CHEBI:83099"/>
        <dbReference type="ChEBI" id="CHEBI:83143"/>
        <dbReference type="EC" id="1.4.4.2"/>
    </reaction>
</comment>
<comment type="cofactor">
    <cofactor evidence="1">
        <name>pyridoxal 5'-phosphate</name>
        <dbReference type="ChEBI" id="CHEBI:597326"/>
    </cofactor>
</comment>
<comment type="subunit">
    <text evidence="1">The glycine cleavage system is composed of four proteins: P, T, L and H.</text>
</comment>
<comment type="similarity">
    <text evidence="1">Belongs to the GcvP family.</text>
</comment>
<protein>
    <recommendedName>
        <fullName evidence="1">Glycine dehydrogenase (decarboxylating)</fullName>
        <ecNumber evidence="1">1.4.4.2</ecNumber>
    </recommendedName>
    <alternativeName>
        <fullName evidence="1">Glycine cleavage system P-protein</fullName>
    </alternativeName>
    <alternativeName>
        <fullName evidence="1">Glycine decarboxylase</fullName>
    </alternativeName>
    <alternativeName>
        <fullName evidence="1">Glycine dehydrogenase (aminomethyl-transferring)</fullName>
    </alternativeName>
</protein>
<name>GCSP_BURTA</name>
<gene>
    <name evidence="1" type="primary">gcvP</name>
    <name type="ordered locus">BTH_I3253</name>
</gene>